<proteinExistence type="inferred from homology"/>
<reference key="1">
    <citation type="journal article" date="2011" name="Stand. Genomic Sci.">
        <title>Complete genome sequence of the halophilic and highly halotolerant Chromohalobacter salexigens type strain (1H11(T)).</title>
        <authorList>
            <person name="Copeland A."/>
            <person name="O'Connor K."/>
            <person name="Lucas S."/>
            <person name="Lapidus A."/>
            <person name="Berry K.W."/>
            <person name="Detter J.C."/>
            <person name="Del Rio T.G."/>
            <person name="Hammon N."/>
            <person name="Dalin E."/>
            <person name="Tice H."/>
            <person name="Pitluck S."/>
            <person name="Bruce D."/>
            <person name="Goodwin L."/>
            <person name="Han C."/>
            <person name="Tapia R."/>
            <person name="Saunders E."/>
            <person name="Schmutz J."/>
            <person name="Brettin T."/>
            <person name="Larimer F."/>
            <person name="Land M."/>
            <person name="Hauser L."/>
            <person name="Vargas C."/>
            <person name="Nieto J.J."/>
            <person name="Kyrpides N.C."/>
            <person name="Ivanova N."/>
            <person name="Goker M."/>
            <person name="Klenk H.P."/>
            <person name="Csonka L.N."/>
            <person name="Woyke T."/>
        </authorList>
    </citation>
    <scope>NUCLEOTIDE SEQUENCE [LARGE SCALE GENOMIC DNA]</scope>
    <source>
        <strain>ATCC BAA-138 / DSM 3043 / CIP 106854 / NCIMB 13768 / 1H11</strain>
    </source>
</reference>
<gene>
    <name evidence="1" type="primary">prmA</name>
    <name type="ordered locus">Csal_2286</name>
</gene>
<keyword id="KW-0963">Cytoplasm</keyword>
<keyword id="KW-0489">Methyltransferase</keyword>
<keyword id="KW-1185">Reference proteome</keyword>
<keyword id="KW-0949">S-adenosyl-L-methionine</keyword>
<keyword id="KW-0808">Transferase</keyword>
<name>PRMA_CHRSD</name>
<dbReference type="EC" id="2.1.1.-" evidence="1"/>
<dbReference type="EMBL" id="CP000285">
    <property type="protein sequence ID" value="ABE59636.1"/>
    <property type="molecule type" value="Genomic_DNA"/>
</dbReference>
<dbReference type="RefSeq" id="WP_011507582.1">
    <property type="nucleotide sequence ID" value="NC_007963.1"/>
</dbReference>
<dbReference type="SMR" id="Q1QV72"/>
<dbReference type="STRING" id="290398.Csal_2286"/>
<dbReference type="GeneID" id="95334998"/>
<dbReference type="KEGG" id="csa:Csal_2286"/>
<dbReference type="eggNOG" id="COG2264">
    <property type="taxonomic scope" value="Bacteria"/>
</dbReference>
<dbReference type="HOGENOM" id="CLU_049382_4_1_6"/>
<dbReference type="OrthoDB" id="9785995at2"/>
<dbReference type="Proteomes" id="UP000000239">
    <property type="component" value="Chromosome"/>
</dbReference>
<dbReference type="GO" id="GO:0005829">
    <property type="term" value="C:cytosol"/>
    <property type="evidence" value="ECO:0007669"/>
    <property type="project" value="TreeGrafter"/>
</dbReference>
<dbReference type="GO" id="GO:0016279">
    <property type="term" value="F:protein-lysine N-methyltransferase activity"/>
    <property type="evidence" value="ECO:0007669"/>
    <property type="project" value="TreeGrafter"/>
</dbReference>
<dbReference type="GO" id="GO:0032259">
    <property type="term" value="P:methylation"/>
    <property type="evidence" value="ECO:0007669"/>
    <property type="project" value="UniProtKB-KW"/>
</dbReference>
<dbReference type="CDD" id="cd02440">
    <property type="entry name" value="AdoMet_MTases"/>
    <property type="match status" value="1"/>
</dbReference>
<dbReference type="Gene3D" id="3.40.50.150">
    <property type="entry name" value="Vaccinia Virus protein VP39"/>
    <property type="match status" value="1"/>
</dbReference>
<dbReference type="HAMAP" id="MF_00735">
    <property type="entry name" value="Methyltr_PrmA"/>
    <property type="match status" value="1"/>
</dbReference>
<dbReference type="InterPro" id="IPR050078">
    <property type="entry name" value="Ribosomal_L11_MeTrfase_PrmA"/>
</dbReference>
<dbReference type="InterPro" id="IPR004498">
    <property type="entry name" value="Ribosomal_PrmA_MeTrfase"/>
</dbReference>
<dbReference type="InterPro" id="IPR029063">
    <property type="entry name" value="SAM-dependent_MTases_sf"/>
</dbReference>
<dbReference type="NCBIfam" id="TIGR00406">
    <property type="entry name" value="prmA"/>
    <property type="match status" value="1"/>
</dbReference>
<dbReference type="PANTHER" id="PTHR43648">
    <property type="entry name" value="ELECTRON TRANSFER FLAVOPROTEIN BETA SUBUNIT LYSINE METHYLTRANSFERASE"/>
    <property type="match status" value="1"/>
</dbReference>
<dbReference type="PANTHER" id="PTHR43648:SF1">
    <property type="entry name" value="ELECTRON TRANSFER FLAVOPROTEIN BETA SUBUNIT LYSINE METHYLTRANSFERASE"/>
    <property type="match status" value="1"/>
</dbReference>
<dbReference type="Pfam" id="PF06325">
    <property type="entry name" value="PrmA"/>
    <property type="match status" value="1"/>
</dbReference>
<dbReference type="PIRSF" id="PIRSF000401">
    <property type="entry name" value="RPL11_MTase"/>
    <property type="match status" value="1"/>
</dbReference>
<dbReference type="SUPFAM" id="SSF53335">
    <property type="entry name" value="S-adenosyl-L-methionine-dependent methyltransferases"/>
    <property type="match status" value="1"/>
</dbReference>
<organism>
    <name type="scientific">Chromohalobacter salexigens (strain ATCC BAA-138 / DSM 3043 / CIP 106854 / NCIMB 13768 / 1H11)</name>
    <dbReference type="NCBI Taxonomy" id="290398"/>
    <lineage>
        <taxon>Bacteria</taxon>
        <taxon>Pseudomonadati</taxon>
        <taxon>Pseudomonadota</taxon>
        <taxon>Gammaproteobacteria</taxon>
        <taxon>Oceanospirillales</taxon>
        <taxon>Halomonadaceae</taxon>
        <taxon>Chromohalobacter</taxon>
    </lineage>
</organism>
<feature type="chain" id="PRO_1000046007" description="Ribosomal protein L11 methyltransferase">
    <location>
        <begin position="1"/>
        <end position="299"/>
    </location>
</feature>
<feature type="binding site" evidence="1">
    <location>
        <position position="149"/>
    </location>
    <ligand>
        <name>S-adenosyl-L-methionine</name>
        <dbReference type="ChEBI" id="CHEBI:59789"/>
    </ligand>
</feature>
<feature type="binding site" evidence="1">
    <location>
        <position position="170"/>
    </location>
    <ligand>
        <name>S-adenosyl-L-methionine</name>
        <dbReference type="ChEBI" id="CHEBI:59789"/>
    </ligand>
</feature>
<feature type="binding site" evidence="1">
    <location>
        <position position="192"/>
    </location>
    <ligand>
        <name>S-adenosyl-L-methionine</name>
        <dbReference type="ChEBI" id="CHEBI:59789"/>
    </ligand>
</feature>
<feature type="binding site" evidence="1">
    <location>
        <position position="234"/>
    </location>
    <ligand>
        <name>S-adenosyl-L-methionine</name>
        <dbReference type="ChEBI" id="CHEBI:59789"/>
    </ligand>
</feature>
<protein>
    <recommendedName>
        <fullName evidence="1">Ribosomal protein L11 methyltransferase</fullName>
        <shortName evidence="1">L11 Mtase</shortName>
        <ecNumber evidence="1">2.1.1.-</ecNumber>
    </recommendedName>
</protein>
<comment type="function">
    <text evidence="1">Methylates ribosomal protein L11.</text>
</comment>
<comment type="catalytic activity">
    <reaction evidence="1">
        <text>L-lysyl-[protein] + 3 S-adenosyl-L-methionine = N(6),N(6),N(6)-trimethyl-L-lysyl-[protein] + 3 S-adenosyl-L-homocysteine + 3 H(+)</text>
        <dbReference type="Rhea" id="RHEA:54192"/>
        <dbReference type="Rhea" id="RHEA-COMP:9752"/>
        <dbReference type="Rhea" id="RHEA-COMP:13826"/>
        <dbReference type="ChEBI" id="CHEBI:15378"/>
        <dbReference type="ChEBI" id="CHEBI:29969"/>
        <dbReference type="ChEBI" id="CHEBI:57856"/>
        <dbReference type="ChEBI" id="CHEBI:59789"/>
        <dbReference type="ChEBI" id="CHEBI:61961"/>
    </reaction>
</comment>
<comment type="subcellular location">
    <subcellularLocation>
        <location evidence="1">Cytoplasm</location>
    </subcellularLocation>
</comment>
<comment type="similarity">
    <text evidence="1">Belongs to the methyltransferase superfamily. PrmA family.</text>
</comment>
<accession>Q1QV72</accession>
<sequence>MPWLQLKAHIAPQHAETLEDLLLAEGAQVITLQDAHDDPVFEPESGTTPLWNETVLTGLYDDLEDIEPMLERVRQQWAAEMADEPCPEIDYELVADRDWEREWMDDFAPLKMGERLWVVPSWHEAPEPGAVNLLLDPGLAFGTGTHPTTALCLAWLDGLDLDASRVLDFGCGSGILAIAALKLGARHATGTDIDPQALQASRDNAQRNDVADEHLSLCYPERLADERHDVVVANILAGPLVELAPTLCAHLAPGGRLALSGILAGQAEEVMDAYREQGMLLDAPVEREGWVRITGKAPA</sequence>
<evidence type="ECO:0000255" key="1">
    <source>
        <dbReference type="HAMAP-Rule" id="MF_00735"/>
    </source>
</evidence>